<comment type="subcellular location">
    <subcellularLocation>
        <location evidence="4">Endoplasmic reticulum membrane</location>
        <topology evidence="4">Lipid-anchor</topology>
    </subcellularLocation>
</comment>
<sequence>MVVDTKLYDILEVHFEASAEEIKKSYKRLALLHHPDKAPIHEKEEAAERFRGVQEAYDILKDPESREMYDMYGMNSDSNSQFDGGVNLDDVLAQMFGMNFEAGGPGKNVPRDRKRRGSDVIHDYEISLEDMFKGKEVKLRATRNTLCPRCQGRGGKRFAKEKPCLSCDGKGVKQHLKHVGPHHVTNSQVICDTCNGKGVSFRGKDRCKHCKGSGTVPEQRMLSFFVNRSAKENDKIIQRGMADEAYGITPGDVILQLHQKPHPVFERLGDDLKAKLKISLAEALTGFNRVILTTLDGRGLEYVQPIGKILHPGDCLIIPGEGMYKDSKTDLRGDLYLEVDIEFPKDGLIGTTEIEILRDILPSIPKVSVMDDTLIDSVRGVPGDISHFGGDARYANEDYGDETYEGVPECQAQ</sequence>
<feature type="chain" id="PRO_0000314108" description="DnaJ protein homolog xdj1">
    <location>
        <begin position="1"/>
        <end position="410"/>
    </location>
</feature>
<feature type="propeptide" id="PRO_0000396659" description="Removed in mature form" evidence="1">
    <location>
        <begin position="411"/>
        <end position="413"/>
    </location>
</feature>
<feature type="domain" description="J" evidence="2">
    <location>
        <begin position="6"/>
        <end position="73"/>
    </location>
</feature>
<feature type="repeat" description="CXXCXGXG motif">
    <location>
        <begin position="147"/>
        <end position="154"/>
    </location>
</feature>
<feature type="repeat" description="CXXCXGXG motif">
    <location>
        <begin position="164"/>
        <end position="171"/>
    </location>
</feature>
<feature type="repeat" description="CXXCXGXG motif">
    <location>
        <begin position="191"/>
        <end position="198"/>
    </location>
</feature>
<feature type="repeat" description="CXXCXGXG motif">
    <location>
        <begin position="207"/>
        <end position="214"/>
    </location>
</feature>
<feature type="zinc finger region" description="CR-type" evidence="3">
    <location>
        <begin position="134"/>
        <end position="219"/>
    </location>
</feature>
<feature type="modified residue" description="Cysteine methyl ester" evidence="1">
    <location>
        <position position="410"/>
    </location>
</feature>
<feature type="lipid moiety-binding region" description="S-farnesyl cysteine" evidence="1">
    <location>
        <position position="410"/>
    </location>
</feature>
<gene>
    <name type="primary">xdj1</name>
    <name type="ORF">SPBC405.06</name>
</gene>
<reference key="1">
    <citation type="journal article" date="2002" name="Nature">
        <title>The genome sequence of Schizosaccharomyces pombe.</title>
        <authorList>
            <person name="Wood V."/>
            <person name="Gwilliam R."/>
            <person name="Rajandream M.A."/>
            <person name="Lyne M.H."/>
            <person name="Lyne R."/>
            <person name="Stewart A."/>
            <person name="Sgouros J.G."/>
            <person name="Peat N."/>
            <person name="Hayles J."/>
            <person name="Baker S.G."/>
            <person name="Basham D."/>
            <person name="Bowman S."/>
            <person name="Brooks K."/>
            <person name="Brown D."/>
            <person name="Brown S."/>
            <person name="Chillingworth T."/>
            <person name="Churcher C.M."/>
            <person name="Collins M."/>
            <person name="Connor R."/>
            <person name="Cronin A."/>
            <person name="Davis P."/>
            <person name="Feltwell T."/>
            <person name="Fraser A."/>
            <person name="Gentles S."/>
            <person name="Goble A."/>
            <person name="Hamlin N."/>
            <person name="Harris D.E."/>
            <person name="Hidalgo J."/>
            <person name="Hodgson G."/>
            <person name="Holroyd S."/>
            <person name="Hornsby T."/>
            <person name="Howarth S."/>
            <person name="Huckle E.J."/>
            <person name="Hunt S."/>
            <person name="Jagels K."/>
            <person name="James K.D."/>
            <person name="Jones L."/>
            <person name="Jones M."/>
            <person name="Leather S."/>
            <person name="McDonald S."/>
            <person name="McLean J."/>
            <person name="Mooney P."/>
            <person name="Moule S."/>
            <person name="Mungall K.L."/>
            <person name="Murphy L.D."/>
            <person name="Niblett D."/>
            <person name="Odell C."/>
            <person name="Oliver K."/>
            <person name="O'Neil S."/>
            <person name="Pearson D."/>
            <person name="Quail M.A."/>
            <person name="Rabbinowitsch E."/>
            <person name="Rutherford K.M."/>
            <person name="Rutter S."/>
            <person name="Saunders D."/>
            <person name="Seeger K."/>
            <person name="Sharp S."/>
            <person name="Skelton J."/>
            <person name="Simmonds M.N."/>
            <person name="Squares R."/>
            <person name="Squares S."/>
            <person name="Stevens K."/>
            <person name="Taylor K."/>
            <person name="Taylor R.G."/>
            <person name="Tivey A."/>
            <person name="Walsh S.V."/>
            <person name="Warren T."/>
            <person name="Whitehead S."/>
            <person name="Woodward J.R."/>
            <person name="Volckaert G."/>
            <person name="Aert R."/>
            <person name="Robben J."/>
            <person name="Grymonprez B."/>
            <person name="Weltjens I."/>
            <person name="Vanstreels E."/>
            <person name="Rieger M."/>
            <person name="Schaefer M."/>
            <person name="Mueller-Auer S."/>
            <person name="Gabel C."/>
            <person name="Fuchs M."/>
            <person name="Duesterhoeft A."/>
            <person name="Fritzc C."/>
            <person name="Holzer E."/>
            <person name="Moestl D."/>
            <person name="Hilbert H."/>
            <person name="Borzym K."/>
            <person name="Langer I."/>
            <person name="Beck A."/>
            <person name="Lehrach H."/>
            <person name="Reinhardt R."/>
            <person name="Pohl T.M."/>
            <person name="Eger P."/>
            <person name="Zimmermann W."/>
            <person name="Wedler H."/>
            <person name="Wambutt R."/>
            <person name="Purnelle B."/>
            <person name="Goffeau A."/>
            <person name="Cadieu E."/>
            <person name="Dreano S."/>
            <person name="Gloux S."/>
            <person name="Lelaure V."/>
            <person name="Mottier S."/>
            <person name="Galibert F."/>
            <person name="Aves S.J."/>
            <person name="Xiang Z."/>
            <person name="Hunt C."/>
            <person name="Moore K."/>
            <person name="Hurst S.M."/>
            <person name="Lucas M."/>
            <person name="Rochet M."/>
            <person name="Gaillardin C."/>
            <person name="Tallada V.A."/>
            <person name="Garzon A."/>
            <person name="Thode G."/>
            <person name="Daga R.R."/>
            <person name="Cruzado L."/>
            <person name="Jimenez J."/>
            <person name="Sanchez M."/>
            <person name="del Rey F."/>
            <person name="Benito J."/>
            <person name="Dominguez A."/>
            <person name="Revuelta J.L."/>
            <person name="Moreno S."/>
            <person name="Armstrong J."/>
            <person name="Forsburg S.L."/>
            <person name="Cerutti L."/>
            <person name="Lowe T."/>
            <person name="McCombie W.R."/>
            <person name="Paulsen I."/>
            <person name="Potashkin J."/>
            <person name="Shpakovski G.V."/>
            <person name="Ussery D."/>
            <person name="Barrell B.G."/>
            <person name="Nurse P."/>
        </authorList>
    </citation>
    <scope>NUCLEOTIDE SEQUENCE [LARGE SCALE GENOMIC DNA]</scope>
    <source>
        <strain>972 / ATCC 24843</strain>
    </source>
</reference>
<reference key="2">
    <citation type="journal article" date="2006" name="Nat. Biotechnol.">
        <title>ORFeome cloning and global analysis of protein localization in the fission yeast Schizosaccharomyces pombe.</title>
        <authorList>
            <person name="Matsuyama A."/>
            <person name="Arai R."/>
            <person name="Yashiroda Y."/>
            <person name="Shirai A."/>
            <person name="Kamata A."/>
            <person name="Sekido S."/>
            <person name="Kobayashi Y."/>
            <person name="Hashimoto A."/>
            <person name="Hamamoto M."/>
            <person name="Hiraoka Y."/>
            <person name="Horinouchi S."/>
            <person name="Yoshida M."/>
        </authorList>
    </citation>
    <scope>SUBCELLULAR LOCATION [LARGE SCALE ANALYSIS]</scope>
</reference>
<name>XDJ1_SCHPO</name>
<proteinExistence type="inferred from homology"/>
<keyword id="KW-0143">Chaperone</keyword>
<keyword id="KW-0256">Endoplasmic reticulum</keyword>
<keyword id="KW-0449">Lipoprotein</keyword>
<keyword id="KW-0472">Membrane</keyword>
<keyword id="KW-0479">Metal-binding</keyword>
<keyword id="KW-0488">Methylation</keyword>
<keyword id="KW-0636">Prenylation</keyword>
<keyword id="KW-1185">Reference proteome</keyword>
<keyword id="KW-0677">Repeat</keyword>
<keyword id="KW-0862">Zinc</keyword>
<keyword id="KW-0863">Zinc-finger</keyword>
<dbReference type="EMBL" id="CU329671">
    <property type="protein sequence ID" value="CAB38605.1"/>
    <property type="molecule type" value="Genomic_DNA"/>
</dbReference>
<dbReference type="PIR" id="T40427">
    <property type="entry name" value="T40427"/>
</dbReference>
<dbReference type="RefSeq" id="NP_596309.1">
    <property type="nucleotide sequence ID" value="NM_001022231.2"/>
</dbReference>
<dbReference type="SMR" id="O94657"/>
<dbReference type="BioGRID" id="277293">
    <property type="interactions" value="3"/>
</dbReference>
<dbReference type="FunCoup" id="O94657">
    <property type="interactions" value="489"/>
</dbReference>
<dbReference type="STRING" id="284812.O94657"/>
<dbReference type="iPTMnet" id="O94657"/>
<dbReference type="PaxDb" id="4896-SPBC405.06.1"/>
<dbReference type="EnsemblFungi" id="SPBC405.06.1">
    <property type="protein sequence ID" value="SPBC405.06.1:pep"/>
    <property type="gene ID" value="SPBC405.06"/>
</dbReference>
<dbReference type="GeneID" id="2540773"/>
<dbReference type="KEGG" id="spo:2540773"/>
<dbReference type="PomBase" id="SPBC405.06">
    <property type="gene designation" value="xdj1"/>
</dbReference>
<dbReference type="VEuPathDB" id="FungiDB:SPBC405.06"/>
<dbReference type="eggNOG" id="KOG0712">
    <property type="taxonomic scope" value="Eukaryota"/>
</dbReference>
<dbReference type="HOGENOM" id="CLU_017633_10_0_1"/>
<dbReference type="InParanoid" id="O94657"/>
<dbReference type="OMA" id="IVFHIVE"/>
<dbReference type="PhylomeDB" id="O94657"/>
<dbReference type="Reactome" id="R-SPO-3371497">
    <property type="pathway name" value="HSP90 chaperone cycle for steroid hormone receptors (SHR) in the presence of ligand"/>
</dbReference>
<dbReference type="PRO" id="PR:O94657"/>
<dbReference type="Proteomes" id="UP000002485">
    <property type="component" value="Chromosome II"/>
</dbReference>
<dbReference type="GO" id="GO:0005737">
    <property type="term" value="C:cytoplasm"/>
    <property type="evidence" value="ECO:0007005"/>
    <property type="project" value="PomBase"/>
</dbReference>
<dbReference type="GO" id="GO:0005789">
    <property type="term" value="C:endoplasmic reticulum membrane"/>
    <property type="evidence" value="ECO:0007669"/>
    <property type="project" value="UniProtKB-SubCell"/>
</dbReference>
<dbReference type="GO" id="GO:0005739">
    <property type="term" value="C:mitochondrion"/>
    <property type="evidence" value="ECO:0000250"/>
    <property type="project" value="PomBase"/>
</dbReference>
<dbReference type="GO" id="GO:0005634">
    <property type="term" value="C:nucleus"/>
    <property type="evidence" value="ECO:0000250"/>
    <property type="project" value="PomBase"/>
</dbReference>
<dbReference type="GO" id="GO:0030544">
    <property type="term" value="F:Hsp70 protein binding"/>
    <property type="evidence" value="ECO:0000255"/>
    <property type="project" value="PomBase"/>
</dbReference>
<dbReference type="GO" id="GO:0051087">
    <property type="term" value="F:protein-folding chaperone binding"/>
    <property type="evidence" value="ECO:0000318"/>
    <property type="project" value="GO_Central"/>
</dbReference>
<dbReference type="GO" id="GO:0051082">
    <property type="term" value="F:unfolded protein binding"/>
    <property type="evidence" value="ECO:0007669"/>
    <property type="project" value="InterPro"/>
</dbReference>
<dbReference type="GO" id="GO:0008270">
    <property type="term" value="F:zinc ion binding"/>
    <property type="evidence" value="ECO:0007669"/>
    <property type="project" value="UniProtKB-KW"/>
</dbReference>
<dbReference type="GO" id="GO:0042026">
    <property type="term" value="P:protein refolding"/>
    <property type="evidence" value="ECO:0000318"/>
    <property type="project" value="GO_Central"/>
</dbReference>
<dbReference type="CDD" id="cd06257">
    <property type="entry name" value="DnaJ"/>
    <property type="match status" value="1"/>
</dbReference>
<dbReference type="CDD" id="cd10747">
    <property type="entry name" value="DnaJ_C"/>
    <property type="match status" value="1"/>
</dbReference>
<dbReference type="CDD" id="cd10719">
    <property type="entry name" value="DnaJ_zf"/>
    <property type="match status" value="1"/>
</dbReference>
<dbReference type="FunFam" id="2.10.230.10:FF:000001">
    <property type="entry name" value="DnaJ subfamily A member 2"/>
    <property type="match status" value="1"/>
</dbReference>
<dbReference type="FunFam" id="2.60.260.20:FF:000003">
    <property type="entry name" value="DnaJ subfamily A member 2"/>
    <property type="match status" value="1"/>
</dbReference>
<dbReference type="Gene3D" id="1.10.287.110">
    <property type="entry name" value="DnaJ domain"/>
    <property type="match status" value="1"/>
</dbReference>
<dbReference type="Gene3D" id="2.10.230.10">
    <property type="entry name" value="Heat shock protein DnaJ, cysteine-rich domain"/>
    <property type="match status" value="1"/>
</dbReference>
<dbReference type="Gene3D" id="2.60.260.20">
    <property type="entry name" value="Urease metallochaperone UreE, N-terminal domain"/>
    <property type="match status" value="2"/>
</dbReference>
<dbReference type="InterPro" id="IPR002939">
    <property type="entry name" value="DnaJ_C"/>
</dbReference>
<dbReference type="InterPro" id="IPR001623">
    <property type="entry name" value="DnaJ_domain"/>
</dbReference>
<dbReference type="InterPro" id="IPR018253">
    <property type="entry name" value="DnaJ_domain_CS"/>
</dbReference>
<dbReference type="InterPro" id="IPR044713">
    <property type="entry name" value="DNJA1/2-like"/>
</dbReference>
<dbReference type="InterPro" id="IPR008971">
    <property type="entry name" value="HSP40/DnaJ_pept-bd"/>
</dbReference>
<dbReference type="InterPro" id="IPR001305">
    <property type="entry name" value="HSP_DnaJ_Cys-rich_dom"/>
</dbReference>
<dbReference type="InterPro" id="IPR036410">
    <property type="entry name" value="HSP_DnaJ_Cys-rich_dom_sf"/>
</dbReference>
<dbReference type="InterPro" id="IPR036869">
    <property type="entry name" value="J_dom_sf"/>
</dbReference>
<dbReference type="PANTHER" id="PTHR43888">
    <property type="entry name" value="DNAJ-LIKE-2, ISOFORM A-RELATED"/>
    <property type="match status" value="1"/>
</dbReference>
<dbReference type="Pfam" id="PF00226">
    <property type="entry name" value="DnaJ"/>
    <property type="match status" value="1"/>
</dbReference>
<dbReference type="Pfam" id="PF01556">
    <property type="entry name" value="DnaJ_C"/>
    <property type="match status" value="1"/>
</dbReference>
<dbReference type="Pfam" id="PF00684">
    <property type="entry name" value="DnaJ_CXXCXGXG"/>
    <property type="match status" value="1"/>
</dbReference>
<dbReference type="PRINTS" id="PR00625">
    <property type="entry name" value="JDOMAIN"/>
</dbReference>
<dbReference type="SMART" id="SM00271">
    <property type="entry name" value="DnaJ"/>
    <property type="match status" value="1"/>
</dbReference>
<dbReference type="SUPFAM" id="SSF46565">
    <property type="entry name" value="Chaperone J-domain"/>
    <property type="match status" value="1"/>
</dbReference>
<dbReference type="SUPFAM" id="SSF57938">
    <property type="entry name" value="DnaJ/Hsp40 cysteine-rich domain"/>
    <property type="match status" value="1"/>
</dbReference>
<dbReference type="SUPFAM" id="SSF49493">
    <property type="entry name" value="HSP40/DnaJ peptide-binding domain"/>
    <property type="match status" value="2"/>
</dbReference>
<dbReference type="PROSITE" id="PS00636">
    <property type="entry name" value="DNAJ_1"/>
    <property type="match status" value="1"/>
</dbReference>
<dbReference type="PROSITE" id="PS50076">
    <property type="entry name" value="DNAJ_2"/>
    <property type="match status" value="1"/>
</dbReference>
<dbReference type="PROSITE" id="PS51188">
    <property type="entry name" value="ZF_CR"/>
    <property type="match status" value="1"/>
</dbReference>
<organism>
    <name type="scientific">Schizosaccharomyces pombe (strain 972 / ATCC 24843)</name>
    <name type="common">Fission yeast</name>
    <dbReference type="NCBI Taxonomy" id="284812"/>
    <lineage>
        <taxon>Eukaryota</taxon>
        <taxon>Fungi</taxon>
        <taxon>Dikarya</taxon>
        <taxon>Ascomycota</taxon>
        <taxon>Taphrinomycotina</taxon>
        <taxon>Schizosaccharomycetes</taxon>
        <taxon>Schizosaccharomycetales</taxon>
        <taxon>Schizosaccharomycetaceae</taxon>
        <taxon>Schizosaccharomyces</taxon>
    </lineage>
</organism>
<accession>O94657</accession>
<evidence type="ECO:0000255" key="1"/>
<evidence type="ECO:0000255" key="2">
    <source>
        <dbReference type="PROSITE-ProRule" id="PRU00286"/>
    </source>
</evidence>
<evidence type="ECO:0000255" key="3">
    <source>
        <dbReference type="PROSITE-ProRule" id="PRU00546"/>
    </source>
</evidence>
<evidence type="ECO:0000305" key="4"/>
<protein>
    <recommendedName>
        <fullName>DnaJ protein homolog xdj1</fullName>
    </recommendedName>
</protein>